<accession>A9R087</accession>
<proteinExistence type="inferred from homology"/>
<reference key="1">
    <citation type="journal article" date="2010" name="J. Bacteriol.">
        <title>Genome sequence of the deep-rooted Yersinia pestis strain Angola reveals new insights into the evolution and pangenome of the plague bacterium.</title>
        <authorList>
            <person name="Eppinger M."/>
            <person name="Worsham P.L."/>
            <person name="Nikolich M.P."/>
            <person name="Riley D.R."/>
            <person name="Sebastian Y."/>
            <person name="Mou S."/>
            <person name="Achtman M."/>
            <person name="Lindler L.E."/>
            <person name="Ravel J."/>
        </authorList>
    </citation>
    <scope>NUCLEOTIDE SEQUENCE [LARGE SCALE GENOMIC DNA]</scope>
    <source>
        <strain>Angola</strain>
    </source>
</reference>
<sequence>MSSLRLLISDSYDPWFNLAVEECIFRQMSPNQRVLFLWRNADTVVIGRAQNPWKECNTRRMEQDGVKLARRSSGGGAVFHDLGNTCFTFMAGKPGYDKTISTQIILNALASLGIQATASGRNDLVVINGEDERKVSGSAYKETKDRGFHHGTLLLNADLSRLADYLNPDPKKLQAKGITSVRSRVTNLVELLPGIDHGKIRTAIEQAFFAYYDEQVSAEVISPQSLPNLPGFTEQFAKQSSWEWNFGQAPAFSHVVDTRFIWGGIELHFDVLHGAIDRCQIFTDSLNPTPLEALAQRLQGAAYRPDAIDKICQHWIDDFPELQTELQQACHWLVEVLR</sequence>
<protein>
    <recommendedName>
        <fullName evidence="1">Lipoate-protein ligase A</fullName>
        <ecNumber evidence="1">6.3.1.20</ecNumber>
    </recommendedName>
    <alternativeName>
        <fullName evidence="1">Lipoate--protein ligase</fullName>
    </alternativeName>
</protein>
<gene>
    <name evidence="1" type="primary">lplA</name>
    <name type="ordered locus">YpAngola_A2604</name>
</gene>
<comment type="function">
    <text evidence="1">Catalyzes both the ATP-dependent activation of exogenously supplied lipoate to lipoyl-AMP and the transfer of the activated lipoyl onto the lipoyl domains of lipoate-dependent enzymes.</text>
</comment>
<comment type="catalytic activity">
    <reaction evidence="1">
        <text>L-lysyl-[lipoyl-carrier protein] + (R)-lipoate + ATP = N(6)-[(R)-lipoyl]-L-lysyl-[lipoyl-carrier protein] + AMP + diphosphate + H(+)</text>
        <dbReference type="Rhea" id="RHEA:49288"/>
        <dbReference type="Rhea" id="RHEA-COMP:10500"/>
        <dbReference type="Rhea" id="RHEA-COMP:10502"/>
        <dbReference type="ChEBI" id="CHEBI:15378"/>
        <dbReference type="ChEBI" id="CHEBI:29969"/>
        <dbReference type="ChEBI" id="CHEBI:30616"/>
        <dbReference type="ChEBI" id="CHEBI:33019"/>
        <dbReference type="ChEBI" id="CHEBI:83088"/>
        <dbReference type="ChEBI" id="CHEBI:83099"/>
        <dbReference type="ChEBI" id="CHEBI:456215"/>
        <dbReference type="EC" id="6.3.1.20"/>
    </reaction>
</comment>
<comment type="pathway">
    <text evidence="1">Protein modification; protein lipoylation via exogenous pathway; protein N(6)-(lipoyl)lysine from lipoate: step 1/2.</text>
</comment>
<comment type="pathway">
    <text evidence="1">Protein modification; protein lipoylation via exogenous pathway; protein N(6)-(lipoyl)lysine from lipoate: step 2/2.</text>
</comment>
<comment type="subunit">
    <text evidence="1">Monomer.</text>
</comment>
<comment type="subcellular location">
    <subcellularLocation>
        <location evidence="1">Cytoplasm</location>
    </subcellularLocation>
</comment>
<comment type="miscellaneous">
    <text evidence="1">In the transfer reaction, the free carboxyl group of lipoic acid is attached via an amide linkage to the epsilon-amino group of a specific lysine residue of lipoyl domains of lipoate-dependent enzymes.</text>
</comment>
<comment type="similarity">
    <text evidence="1">Belongs to the LplA family.</text>
</comment>
<dbReference type="EC" id="6.3.1.20" evidence="1"/>
<dbReference type="EMBL" id="CP000901">
    <property type="protein sequence ID" value="ABX87880.1"/>
    <property type="molecule type" value="Genomic_DNA"/>
</dbReference>
<dbReference type="RefSeq" id="WP_002211816.1">
    <property type="nucleotide sequence ID" value="NZ_CP009935.1"/>
</dbReference>
<dbReference type="SMR" id="A9R087"/>
<dbReference type="KEGG" id="ypg:YpAngola_A2604"/>
<dbReference type="PATRIC" id="fig|349746.12.peg.3630"/>
<dbReference type="UniPathway" id="UPA00537">
    <property type="reaction ID" value="UER00594"/>
</dbReference>
<dbReference type="UniPathway" id="UPA00537">
    <property type="reaction ID" value="UER00595"/>
</dbReference>
<dbReference type="GO" id="GO:0005829">
    <property type="term" value="C:cytosol"/>
    <property type="evidence" value="ECO:0007669"/>
    <property type="project" value="TreeGrafter"/>
</dbReference>
<dbReference type="GO" id="GO:0005524">
    <property type="term" value="F:ATP binding"/>
    <property type="evidence" value="ECO:0007669"/>
    <property type="project" value="UniProtKB-KW"/>
</dbReference>
<dbReference type="GO" id="GO:0016979">
    <property type="term" value="F:lipoate-protein ligase activity"/>
    <property type="evidence" value="ECO:0007669"/>
    <property type="project" value="UniProtKB-UniRule"/>
</dbReference>
<dbReference type="GO" id="GO:0017118">
    <property type="term" value="F:lipoyltransferase activity"/>
    <property type="evidence" value="ECO:0007669"/>
    <property type="project" value="TreeGrafter"/>
</dbReference>
<dbReference type="GO" id="GO:0036211">
    <property type="term" value="P:protein modification process"/>
    <property type="evidence" value="ECO:0007669"/>
    <property type="project" value="InterPro"/>
</dbReference>
<dbReference type="CDD" id="cd16443">
    <property type="entry name" value="LplA"/>
    <property type="match status" value="1"/>
</dbReference>
<dbReference type="FunFam" id="3.30.930.10:FF:000024">
    <property type="entry name" value="Lipoate-protein ligase A"/>
    <property type="match status" value="1"/>
</dbReference>
<dbReference type="Gene3D" id="3.30.930.10">
    <property type="entry name" value="Bira Bifunctional Protein, Domain 2"/>
    <property type="match status" value="1"/>
</dbReference>
<dbReference type="Gene3D" id="3.30.390.50">
    <property type="entry name" value="CO dehydrogenase flavoprotein, C-terminal domain"/>
    <property type="match status" value="1"/>
</dbReference>
<dbReference type="HAMAP" id="MF_01602">
    <property type="entry name" value="LplA"/>
    <property type="match status" value="1"/>
</dbReference>
<dbReference type="InterPro" id="IPR045864">
    <property type="entry name" value="aa-tRNA-synth_II/BPL/LPL"/>
</dbReference>
<dbReference type="InterPro" id="IPR004143">
    <property type="entry name" value="BPL_LPL_catalytic"/>
</dbReference>
<dbReference type="InterPro" id="IPR023741">
    <property type="entry name" value="Lipoate_ligase_A"/>
</dbReference>
<dbReference type="InterPro" id="IPR019491">
    <property type="entry name" value="Lipoate_protein_ligase_C"/>
</dbReference>
<dbReference type="InterPro" id="IPR004562">
    <property type="entry name" value="LipoylTrfase_LipoateP_Ligase"/>
</dbReference>
<dbReference type="NCBIfam" id="TIGR00545">
    <property type="entry name" value="lipoyltrans"/>
    <property type="match status" value="1"/>
</dbReference>
<dbReference type="PANTHER" id="PTHR12561">
    <property type="entry name" value="LIPOATE-PROTEIN LIGASE"/>
    <property type="match status" value="1"/>
</dbReference>
<dbReference type="PANTHER" id="PTHR12561:SF3">
    <property type="entry name" value="LIPOYLTRANSFERASE 1, MITOCHONDRIAL"/>
    <property type="match status" value="1"/>
</dbReference>
<dbReference type="Pfam" id="PF10437">
    <property type="entry name" value="Lip_prot_lig_C"/>
    <property type="match status" value="1"/>
</dbReference>
<dbReference type="Pfam" id="PF21948">
    <property type="entry name" value="LplA-B_cat"/>
    <property type="match status" value="1"/>
</dbReference>
<dbReference type="SUPFAM" id="SSF55681">
    <property type="entry name" value="Class II aaRS and biotin synthetases"/>
    <property type="match status" value="1"/>
</dbReference>
<dbReference type="SUPFAM" id="SSF82649">
    <property type="entry name" value="SufE/NifU"/>
    <property type="match status" value="1"/>
</dbReference>
<dbReference type="PROSITE" id="PS51733">
    <property type="entry name" value="BPL_LPL_CATALYTIC"/>
    <property type="match status" value="1"/>
</dbReference>
<feature type="chain" id="PRO_1000148120" description="Lipoate-protein ligase A">
    <location>
        <begin position="1"/>
        <end position="338"/>
    </location>
</feature>
<feature type="domain" description="BPL/LPL catalytic" evidence="2">
    <location>
        <begin position="29"/>
        <end position="216"/>
    </location>
</feature>
<feature type="binding site" evidence="1">
    <location>
        <position position="71"/>
    </location>
    <ligand>
        <name>ATP</name>
        <dbReference type="ChEBI" id="CHEBI:30616"/>
    </ligand>
</feature>
<feature type="binding site" evidence="1">
    <location>
        <begin position="76"/>
        <end position="79"/>
    </location>
    <ligand>
        <name>ATP</name>
        <dbReference type="ChEBI" id="CHEBI:30616"/>
    </ligand>
</feature>
<feature type="binding site" evidence="1">
    <location>
        <position position="134"/>
    </location>
    <ligand>
        <name>(R)-lipoate</name>
        <dbReference type="ChEBI" id="CHEBI:83088"/>
    </ligand>
</feature>
<feature type="binding site" evidence="1">
    <location>
        <position position="134"/>
    </location>
    <ligand>
        <name>ATP</name>
        <dbReference type="ChEBI" id="CHEBI:30616"/>
    </ligand>
</feature>
<organism>
    <name type="scientific">Yersinia pestis bv. Antiqua (strain Angola)</name>
    <dbReference type="NCBI Taxonomy" id="349746"/>
    <lineage>
        <taxon>Bacteria</taxon>
        <taxon>Pseudomonadati</taxon>
        <taxon>Pseudomonadota</taxon>
        <taxon>Gammaproteobacteria</taxon>
        <taxon>Enterobacterales</taxon>
        <taxon>Yersiniaceae</taxon>
        <taxon>Yersinia</taxon>
    </lineage>
</organism>
<keyword id="KW-0067">ATP-binding</keyword>
<keyword id="KW-0963">Cytoplasm</keyword>
<keyword id="KW-0436">Ligase</keyword>
<keyword id="KW-0547">Nucleotide-binding</keyword>
<evidence type="ECO:0000255" key="1">
    <source>
        <dbReference type="HAMAP-Rule" id="MF_01602"/>
    </source>
</evidence>
<evidence type="ECO:0000255" key="2">
    <source>
        <dbReference type="PROSITE-ProRule" id="PRU01067"/>
    </source>
</evidence>
<name>LPLA_YERPG</name>